<comment type="function">
    <text evidence="1">Catalyzes the methyl esterification of L-isoaspartyl residues in peptides and proteins that result from spontaneous decomposition of normal L-aspartyl and L-asparaginyl residues. It plays a role in the repair and/or degradation of damaged proteins.</text>
</comment>
<comment type="catalytic activity">
    <reaction evidence="1">
        <text>[protein]-L-isoaspartate + S-adenosyl-L-methionine = [protein]-L-isoaspartate alpha-methyl ester + S-adenosyl-L-homocysteine</text>
        <dbReference type="Rhea" id="RHEA:12705"/>
        <dbReference type="Rhea" id="RHEA-COMP:12143"/>
        <dbReference type="Rhea" id="RHEA-COMP:12144"/>
        <dbReference type="ChEBI" id="CHEBI:57856"/>
        <dbReference type="ChEBI" id="CHEBI:59789"/>
        <dbReference type="ChEBI" id="CHEBI:90596"/>
        <dbReference type="ChEBI" id="CHEBI:90598"/>
        <dbReference type="EC" id="2.1.1.77"/>
    </reaction>
</comment>
<comment type="subcellular location">
    <subcellularLocation>
        <location evidence="1">Cytoplasm</location>
    </subcellularLocation>
</comment>
<comment type="similarity">
    <text evidence="1">Belongs to the methyltransferase superfamily. L-isoaspartyl/D-aspartyl protein methyltransferase family.</text>
</comment>
<evidence type="ECO:0000255" key="1">
    <source>
        <dbReference type="HAMAP-Rule" id="MF_00090"/>
    </source>
</evidence>
<accession>Q3J3D1</accession>
<name>PIMT_CERS4</name>
<keyword id="KW-0963">Cytoplasm</keyword>
<keyword id="KW-0489">Methyltransferase</keyword>
<keyword id="KW-1185">Reference proteome</keyword>
<keyword id="KW-0949">S-adenosyl-L-methionine</keyword>
<keyword id="KW-0808">Transferase</keyword>
<dbReference type="EC" id="2.1.1.77" evidence="1"/>
<dbReference type="EMBL" id="CP000143">
    <property type="protein sequence ID" value="ABA78703.1"/>
    <property type="molecule type" value="Genomic_DNA"/>
</dbReference>
<dbReference type="RefSeq" id="WP_002719695.1">
    <property type="nucleotide sequence ID" value="NZ_CP030271.1"/>
</dbReference>
<dbReference type="RefSeq" id="YP_352604.1">
    <property type="nucleotide sequence ID" value="NC_007493.2"/>
</dbReference>
<dbReference type="SMR" id="Q3J3D1"/>
<dbReference type="STRING" id="272943.RSP_2544"/>
<dbReference type="EnsemblBacteria" id="ABA78703">
    <property type="protein sequence ID" value="ABA78703"/>
    <property type="gene ID" value="RSP_2544"/>
</dbReference>
<dbReference type="KEGG" id="rsp:RSP_2544"/>
<dbReference type="PATRIC" id="fig|272943.9.peg.1464"/>
<dbReference type="eggNOG" id="COG2518">
    <property type="taxonomic scope" value="Bacteria"/>
</dbReference>
<dbReference type="OrthoDB" id="9810066at2"/>
<dbReference type="PhylomeDB" id="Q3J3D1"/>
<dbReference type="Proteomes" id="UP000002703">
    <property type="component" value="Chromosome 1"/>
</dbReference>
<dbReference type="GO" id="GO:0005737">
    <property type="term" value="C:cytoplasm"/>
    <property type="evidence" value="ECO:0007669"/>
    <property type="project" value="UniProtKB-SubCell"/>
</dbReference>
<dbReference type="GO" id="GO:0004719">
    <property type="term" value="F:protein-L-isoaspartate (D-aspartate) O-methyltransferase activity"/>
    <property type="evidence" value="ECO:0007669"/>
    <property type="project" value="UniProtKB-UniRule"/>
</dbReference>
<dbReference type="GO" id="GO:0032259">
    <property type="term" value="P:methylation"/>
    <property type="evidence" value="ECO:0007669"/>
    <property type="project" value="UniProtKB-KW"/>
</dbReference>
<dbReference type="GO" id="GO:0036211">
    <property type="term" value="P:protein modification process"/>
    <property type="evidence" value="ECO:0007669"/>
    <property type="project" value="UniProtKB-UniRule"/>
</dbReference>
<dbReference type="GO" id="GO:0030091">
    <property type="term" value="P:protein repair"/>
    <property type="evidence" value="ECO:0007669"/>
    <property type="project" value="UniProtKB-UniRule"/>
</dbReference>
<dbReference type="CDD" id="cd02440">
    <property type="entry name" value="AdoMet_MTases"/>
    <property type="match status" value="1"/>
</dbReference>
<dbReference type="FunFam" id="3.40.50.150:FF:000010">
    <property type="entry name" value="Protein-L-isoaspartate O-methyltransferase"/>
    <property type="match status" value="1"/>
</dbReference>
<dbReference type="Gene3D" id="3.40.50.150">
    <property type="entry name" value="Vaccinia Virus protein VP39"/>
    <property type="match status" value="1"/>
</dbReference>
<dbReference type="HAMAP" id="MF_00090">
    <property type="entry name" value="PIMT"/>
    <property type="match status" value="1"/>
</dbReference>
<dbReference type="InterPro" id="IPR000682">
    <property type="entry name" value="PCMT"/>
</dbReference>
<dbReference type="InterPro" id="IPR029063">
    <property type="entry name" value="SAM-dependent_MTases_sf"/>
</dbReference>
<dbReference type="NCBIfam" id="TIGR00080">
    <property type="entry name" value="pimt"/>
    <property type="match status" value="1"/>
</dbReference>
<dbReference type="NCBIfam" id="NF001453">
    <property type="entry name" value="PRK00312.1"/>
    <property type="match status" value="1"/>
</dbReference>
<dbReference type="PANTHER" id="PTHR11579">
    <property type="entry name" value="PROTEIN-L-ISOASPARTATE O-METHYLTRANSFERASE"/>
    <property type="match status" value="1"/>
</dbReference>
<dbReference type="PANTHER" id="PTHR11579:SF0">
    <property type="entry name" value="PROTEIN-L-ISOASPARTATE(D-ASPARTATE) O-METHYLTRANSFERASE"/>
    <property type="match status" value="1"/>
</dbReference>
<dbReference type="Pfam" id="PF01135">
    <property type="entry name" value="PCMT"/>
    <property type="match status" value="1"/>
</dbReference>
<dbReference type="SUPFAM" id="SSF53335">
    <property type="entry name" value="S-adenosyl-L-methionine-dependent methyltransferases"/>
    <property type="match status" value="1"/>
</dbReference>
<dbReference type="PROSITE" id="PS01279">
    <property type="entry name" value="PCMT"/>
    <property type="match status" value="1"/>
</dbReference>
<organism>
    <name type="scientific">Cereibacter sphaeroides (strain ATCC 17023 / DSM 158 / JCM 6121 / CCUG 31486 / LMG 2827 / NBRC 12203 / NCIMB 8253 / ATH 2.4.1.)</name>
    <name type="common">Rhodobacter sphaeroides</name>
    <dbReference type="NCBI Taxonomy" id="272943"/>
    <lineage>
        <taxon>Bacteria</taxon>
        <taxon>Pseudomonadati</taxon>
        <taxon>Pseudomonadota</taxon>
        <taxon>Alphaproteobacteria</taxon>
        <taxon>Rhodobacterales</taxon>
        <taxon>Paracoccaceae</taxon>
        <taxon>Cereibacter</taxon>
    </lineage>
</organism>
<feature type="chain" id="PRO_0000351920" description="Protein-L-isoaspartate O-methyltransferase">
    <location>
        <begin position="1"/>
        <end position="219"/>
    </location>
</feature>
<feature type="active site" evidence="1">
    <location>
        <position position="67"/>
    </location>
</feature>
<sequence>MTAEADGEDPAERKMRFLFAVRSRGVTDARVLAAMERIDRGAFVRGIFADRAYEDMPLPIACGQTISQPSVVGLMSQALAVNPRDKVLEVGTGSGYQAAVLSQLARRVYTVDRHRRLVREATEVFHRLSLTNITALIADGSFGLPEQAPFDRILVTAAAEDPPGPLLAQLKIGGIMVVPVGQTDAVQNLIKVTRLEQGYDYEELRPVRFVPLVEGIGSD</sequence>
<gene>
    <name evidence="1" type="primary">pcm</name>
    <name type="ordered locus">RHOS4_11350</name>
    <name type="ORF">RSP_2544</name>
</gene>
<reference key="1">
    <citation type="submission" date="2005-09" db="EMBL/GenBank/DDBJ databases">
        <title>Complete sequence of chromosome 1 of Rhodobacter sphaeroides 2.4.1.</title>
        <authorList>
            <person name="Copeland A."/>
            <person name="Lucas S."/>
            <person name="Lapidus A."/>
            <person name="Barry K."/>
            <person name="Detter J.C."/>
            <person name="Glavina T."/>
            <person name="Hammon N."/>
            <person name="Israni S."/>
            <person name="Pitluck S."/>
            <person name="Richardson P."/>
            <person name="Mackenzie C."/>
            <person name="Choudhary M."/>
            <person name="Larimer F."/>
            <person name="Hauser L.J."/>
            <person name="Land M."/>
            <person name="Donohue T.J."/>
            <person name="Kaplan S."/>
        </authorList>
    </citation>
    <scope>NUCLEOTIDE SEQUENCE [LARGE SCALE GENOMIC DNA]</scope>
    <source>
        <strain>ATCC 17023 / DSM 158 / JCM 6121 / CCUG 31486 / LMG 2827 / NBRC 12203 / NCIMB 8253 / ATH 2.4.1.</strain>
    </source>
</reference>
<proteinExistence type="inferred from homology"/>
<protein>
    <recommendedName>
        <fullName evidence="1">Protein-L-isoaspartate O-methyltransferase</fullName>
        <ecNumber evidence="1">2.1.1.77</ecNumber>
    </recommendedName>
    <alternativeName>
        <fullName evidence="1">L-isoaspartyl protein carboxyl methyltransferase</fullName>
    </alternativeName>
    <alternativeName>
        <fullName evidence="1">Protein L-isoaspartyl methyltransferase</fullName>
    </alternativeName>
    <alternativeName>
        <fullName evidence="1">Protein-beta-aspartate methyltransferase</fullName>
        <shortName evidence="1">PIMT</shortName>
    </alternativeName>
</protein>